<sequence length="102" mass="11628">MNGQNIRIRLKAFDHRILDASTREIVSTAKRTGANVRGPIPLPTRIEKFTVNRSPHIDKKSREQFEMRTHKRLLDIVDPTPQTVDALMKLDLSAGVDVEIKL</sequence>
<keyword id="KW-0687">Ribonucleoprotein</keyword>
<keyword id="KW-0689">Ribosomal protein</keyword>
<accession>B2S680</accession>
<proteinExistence type="inferred from homology"/>
<organism>
    <name type="scientific">Brucella abortus (strain S19)</name>
    <dbReference type="NCBI Taxonomy" id="430066"/>
    <lineage>
        <taxon>Bacteria</taxon>
        <taxon>Pseudomonadati</taxon>
        <taxon>Pseudomonadota</taxon>
        <taxon>Alphaproteobacteria</taxon>
        <taxon>Hyphomicrobiales</taxon>
        <taxon>Brucellaceae</taxon>
        <taxon>Brucella/Ochrobactrum group</taxon>
        <taxon>Brucella</taxon>
    </lineage>
</organism>
<name>RS10_BRUA1</name>
<gene>
    <name evidence="1" type="primary">rpsJ</name>
    <name type="ordered locus">BAbS19_I11720</name>
</gene>
<dbReference type="EMBL" id="CP000887">
    <property type="protein sequence ID" value="ACD72677.1"/>
    <property type="molecule type" value="Genomic_DNA"/>
</dbReference>
<dbReference type="RefSeq" id="WP_002964363.1">
    <property type="nucleotide sequence ID" value="NC_010742.1"/>
</dbReference>
<dbReference type="SMR" id="B2S680"/>
<dbReference type="GeneID" id="97533523"/>
<dbReference type="KEGG" id="bmc:BAbS19_I11720"/>
<dbReference type="HOGENOM" id="CLU_122625_1_3_5"/>
<dbReference type="Proteomes" id="UP000002565">
    <property type="component" value="Chromosome 1"/>
</dbReference>
<dbReference type="GO" id="GO:1990904">
    <property type="term" value="C:ribonucleoprotein complex"/>
    <property type="evidence" value="ECO:0007669"/>
    <property type="project" value="UniProtKB-KW"/>
</dbReference>
<dbReference type="GO" id="GO:0005840">
    <property type="term" value="C:ribosome"/>
    <property type="evidence" value="ECO:0007669"/>
    <property type="project" value="UniProtKB-KW"/>
</dbReference>
<dbReference type="GO" id="GO:0003735">
    <property type="term" value="F:structural constituent of ribosome"/>
    <property type="evidence" value="ECO:0007669"/>
    <property type="project" value="InterPro"/>
</dbReference>
<dbReference type="GO" id="GO:0000049">
    <property type="term" value="F:tRNA binding"/>
    <property type="evidence" value="ECO:0007669"/>
    <property type="project" value="UniProtKB-UniRule"/>
</dbReference>
<dbReference type="GO" id="GO:0006412">
    <property type="term" value="P:translation"/>
    <property type="evidence" value="ECO:0007669"/>
    <property type="project" value="UniProtKB-UniRule"/>
</dbReference>
<dbReference type="FunFam" id="3.30.70.600:FF:000001">
    <property type="entry name" value="30S ribosomal protein S10"/>
    <property type="match status" value="1"/>
</dbReference>
<dbReference type="Gene3D" id="3.30.70.600">
    <property type="entry name" value="Ribosomal protein S10 domain"/>
    <property type="match status" value="1"/>
</dbReference>
<dbReference type="HAMAP" id="MF_00508">
    <property type="entry name" value="Ribosomal_uS10"/>
    <property type="match status" value="1"/>
</dbReference>
<dbReference type="InterPro" id="IPR001848">
    <property type="entry name" value="Ribosomal_uS10"/>
</dbReference>
<dbReference type="InterPro" id="IPR018268">
    <property type="entry name" value="Ribosomal_uS10_CS"/>
</dbReference>
<dbReference type="InterPro" id="IPR027486">
    <property type="entry name" value="Ribosomal_uS10_dom"/>
</dbReference>
<dbReference type="InterPro" id="IPR036838">
    <property type="entry name" value="Ribosomal_uS10_dom_sf"/>
</dbReference>
<dbReference type="NCBIfam" id="NF001861">
    <property type="entry name" value="PRK00596.1"/>
    <property type="match status" value="1"/>
</dbReference>
<dbReference type="NCBIfam" id="TIGR01049">
    <property type="entry name" value="rpsJ_bact"/>
    <property type="match status" value="1"/>
</dbReference>
<dbReference type="PANTHER" id="PTHR11700">
    <property type="entry name" value="30S RIBOSOMAL PROTEIN S10 FAMILY MEMBER"/>
    <property type="match status" value="1"/>
</dbReference>
<dbReference type="Pfam" id="PF00338">
    <property type="entry name" value="Ribosomal_S10"/>
    <property type="match status" value="1"/>
</dbReference>
<dbReference type="PRINTS" id="PR00971">
    <property type="entry name" value="RIBOSOMALS10"/>
</dbReference>
<dbReference type="SMART" id="SM01403">
    <property type="entry name" value="Ribosomal_S10"/>
    <property type="match status" value="1"/>
</dbReference>
<dbReference type="SUPFAM" id="SSF54999">
    <property type="entry name" value="Ribosomal protein S10"/>
    <property type="match status" value="1"/>
</dbReference>
<dbReference type="PROSITE" id="PS00361">
    <property type="entry name" value="RIBOSOMAL_S10"/>
    <property type="match status" value="1"/>
</dbReference>
<protein>
    <recommendedName>
        <fullName evidence="1">Small ribosomal subunit protein uS10</fullName>
    </recommendedName>
    <alternativeName>
        <fullName evidence="2">30S ribosomal protein S10</fullName>
    </alternativeName>
</protein>
<reference key="1">
    <citation type="journal article" date="2008" name="PLoS ONE">
        <title>Genome sequence of Brucella abortus vaccine strain S19 compared to virulent strains yields candidate virulence genes.</title>
        <authorList>
            <person name="Crasta O.R."/>
            <person name="Folkerts O."/>
            <person name="Fei Z."/>
            <person name="Mane S.P."/>
            <person name="Evans C."/>
            <person name="Martino-Catt S."/>
            <person name="Bricker B."/>
            <person name="Yu G."/>
            <person name="Du L."/>
            <person name="Sobral B.W."/>
        </authorList>
    </citation>
    <scope>NUCLEOTIDE SEQUENCE [LARGE SCALE GENOMIC DNA]</scope>
    <source>
        <strain>S19</strain>
    </source>
</reference>
<evidence type="ECO:0000255" key="1">
    <source>
        <dbReference type="HAMAP-Rule" id="MF_00508"/>
    </source>
</evidence>
<evidence type="ECO:0000305" key="2"/>
<feature type="chain" id="PRO_1000127088" description="Small ribosomal subunit protein uS10">
    <location>
        <begin position="1"/>
        <end position="102"/>
    </location>
</feature>
<comment type="function">
    <text evidence="1">Involved in the binding of tRNA to the ribosomes.</text>
</comment>
<comment type="subunit">
    <text evidence="1">Part of the 30S ribosomal subunit.</text>
</comment>
<comment type="similarity">
    <text evidence="1">Belongs to the universal ribosomal protein uS10 family.</text>
</comment>